<proteinExistence type="inferred from homology"/>
<organism>
    <name type="scientific">Salinibacter ruber (strain DSM 13855 / M31)</name>
    <dbReference type="NCBI Taxonomy" id="309807"/>
    <lineage>
        <taxon>Bacteria</taxon>
        <taxon>Pseudomonadati</taxon>
        <taxon>Rhodothermota</taxon>
        <taxon>Rhodothermia</taxon>
        <taxon>Rhodothermales</taxon>
        <taxon>Salinibacteraceae</taxon>
        <taxon>Salinibacter</taxon>
    </lineage>
</organism>
<sequence length="65" mass="7666">MAVPKRRHSKSRTRKRRSTYYNELEPPQLMECNNCGNPKVMHRACKHCGHYRGRQVIEPSDELIA</sequence>
<dbReference type="EMBL" id="CP000159">
    <property type="protein sequence ID" value="ABC45416.1"/>
    <property type="molecule type" value="Genomic_DNA"/>
</dbReference>
<dbReference type="RefSeq" id="WP_011402828.1">
    <property type="nucleotide sequence ID" value="NC_007677.1"/>
</dbReference>
<dbReference type="RefSeq" id="YP_444195.1">
    <property type="nucleotide sequence ID" value="NC_007677.1"/>
</dbReference>
<dbReference type="SMR" id="Q2S6I6"/>
<dbReference type="STRING" id="309807.SRU_0040"/>
<dbReference type="EnsemblBacteria" id="ABC45416">
    <property type="protein sequence ID" value="ABC45416"/>
    <property type="gene ID" value="SRU_0040"/>
</dbReference>
<dbReference type="GeneID" id="83726870"/>
<dbReference type="KEGG" id="sru:SRU_0040"/>
<dbReference type="eggNOG" id="COG0333">
    <property type="taxonomic scope" value="Bacteria"/>
</dbReference>
<dbReference type="HOGENOM" id="CLU_129084_1_0_10"/>
<dbReference type="OrthoDB" id="9812874at2"/>
<dbReference type="Proteomes" id="UP000008674">
    <property type="component" value="Chromosome"/>
</dbReference>
<dbReference type="GO" id="GO:0015934">
    <property type="term" value="C:large ribosomal subunit"/>
    <property type="evidence" value="ECO:0007669"/>
    <property type="project" value="InterPro"/>
</dbReference>
<dbReference type="GO" id="GO:0003735">
    <property type="term" value="F:structural constituent of ribosome"/>
    <property type="evidence" value="ECO:0007669"/>
    <property type="project" value="InterPro"/>
</dbReference>
<dbReference type="GO" id="GO:0006412">
    <property type="term" value="P:translation"/>
    <property type="evidence" value="ECO:0007669"/>
    <property type="project" value="UniProtKB-UniRule"/>
</dbReference>
<dbReference type="HAMAP" id="MF_00340">
    <property type="entry name" value="Ribosomal_bL32"/>
    <property type="match status" value="1"/>
</dbReference>
<dbReference type="InterPro" id="IPR002677">
    <property type="entry name" value="Ribosomal_bL32"/>
</dbReference>
<dbReference type="InterPro" id="IPR044957">
    <property type="entry name" value="Ribosomal_bL32_bact"/>
</dbReference>
<dbReference type="InterPro" id="IPR011332">
    <property type="entry name" value="Ribosomal_zn-bd"/>
</dbReference>
<dbReference type="NCBIfam" id="TIGR01031">
    <property type="entry name" value="rpmF_bact"/>
    <property type="match status" value="1"/>
</dbReference>
<dbReference type="PANTHER" id="PTHR35534">
    <property type="entry name" value="50S RIBOSOMAL PROTEIN L32"/>
    <property type="match status" value="1"/>
</dbReference>
<dbReference type="PANTHER" id="PTHR35534:SF1">
    <property type="entry name" value="LARGE RIBOSOMAL SUBUNIT PROTEIN BL32"/>
    <property type="match status" value="1"/>
</dbReference>
<dbReference type="Pfam" id="PF01783">
    <property type="entry name" value="Ribosomal_L32p"/>
    <property type="match status" value="1"/>
</dbReference>
<dbReference type="SUPFAM" id="SSF57829">
    <property type="entry name" value="Zn-binding ribosomal proteins"/>
    <property type="match status" value="1"/>
</dbReference>
<accession>Q2S6I6</accession>
<name>RL32_SALRD</name>
<keyword id="KW-1185">Reference proteome</keyword>
<keyword id="KW-0687">Ribonucleoprotein</keyword>
<keyword id="KW-0689">Ribosomal protein</keyword>
<gene>
    <name evidence="1" type="primary">rpmF</name>
    <name type="ordered locus">SRU_0040</name>
</gene>
<feature type="chain" id="PRO_0000296557" description="Large ribosomal subunit protein bL32">
    <location>
        <begin position="1"/>
        <end position="65"/>
    </location>
</feature>
<feature type="region of interest" description="Disordered" evidence="2">
    <location>
        <begin position="1"/>
        <end position="20"/>
    </location>
</feature>
<feature type="compositionally biased region" description="Basic residues" evidence="2">
    <location>
        <begin position="1"/>
        <end position="18"/>
    </location>
</feature>
<protein>
    <recommendedName>
        <fullName evidence="1">Large ribosomal subunit protein bL32</fullName>
    </recommendedName>
    <alternativeName>
        <fullName evidence="3">50S ribosomal protein L32</fullName>
    </alternativeName>
</protein>
<comment type="similarity">
    <text evidence="1">Belongs to the bacterial ribosomal protein bL32 family.</text>
</comment>
<reference key="1">
    <citation type="journal article" date="2005" name="Proc. Natl. Acad. Sci. U.S.A.">
        <title>The genome of Salinibacter ruber: convergence and gene exchange among hyperhalophilic bacteria and archaea.</title>
        <authorList>
            <person name="Mongodin E.F."/>
            <person name="Nelson K.E."/>
            <person name="Daugherty S."/>
            <person name="DeBoy R.T."/>
            <person name="Wister J."/>
            <person name="Khouri H."/>
            <person name="Weidman J."/>
            <person name="Walsh D.A."/>
            <person name="Papke R.T."/>
            <person name="Sanchez Perez G."/>
            <person name="Sharma A.K."/>
            <person name="Nesbo C.L."/>
            <person name="MacLeod D."/>
            <person name="Bapteste E."/>
            <person name="Doolittle W.F."/>
            <person name="Charlebois R.L."/>
            <person name="Legault B."/>
            <person name="Rodriguez-Valera F."/>
        </authorList>
    </citation>
    <scope>NUCLEOTIDE SEQUENCE [LARGE SCALE GENOMIC DNA]</scope>
    <source>
        <strain>DSM 13855 / CECT 5946 / M31</strain>
    </source>
</reference>
<evidence type="ECO:0000255" key="1">
    <source>
        <dbReference type="HAMAP-Rule" id="MF_00340"/>
    </source>
</evidence>
<evidence type="ECO:0000256" key="2">
    <source>
        <dbReference type="SAM" id="MobiDB-lite"/>
    </source>
</evidence>
<evidence type="ECO:0000305" key="3"/>